<feature type="chain" id="PRO_1000076670" description="Uracil-DNA glycosylase">
    <location>
        <begin position="1"/>
        <end position="225"/>
    </location>
</feature>
<feature type="active site" description="Proton acceptor" evidence="1">
    <location>
        <position position="64"/>
    </location>
</feature>
<organism>
    <name type="scientific">Lachnoclostridium phytofermentans (strain ATCC 700394 / DSM 18823 / ISDg)</name>
    <name type="common">Clostridium phytofermentans</name>
    <dbReference type="NCBI Taxonomy" id="357809"/>
    <lineage>
        <taxon>Bacteria</taxon>
        <taxon>Bacillati</taxon>
        <taxon>Bacillota</taxon>
        <taxon>Clostridia</taxon>
        <taxon>Lachnospirales</taxon>
        <taxon>Lachnospiraceae</taxon>
    </lineage>
</organism>
<evidence type="ECO:0000255" key="1">
    <source>
        <dbReference type="HAMAP-Rule" id="MF_00148"/>
    </source>
</evidence>
<dbReference type="EC" id="3.2.2.27" evidence="1"/>
<dbReference type="EMBL" id="CP000885">
    <property type="protein sequence ID" value="ABX43199.1"/>
    <property type="molecule type" value="Genomic_DNA"/>
</dbReference>
<dbReference type="RefSeq" id="WP_012200850.1">
    <property type="nucleotide sequence ID" value="NC_010001.1"/>
</dbReference>
<dbReference type="SMR" id="A9KP29"/>
<dbReference type="STRING" id="357809.Cphy_2839"/>
<dbReference type="KEGG" id="cpy:Cphy_2839"/>
<dbReference type="eggNOG" id="COG0692">
    <property type="taxonomic scope" value="Bacteria"/>
</dbReference>
<dbReference type="HOGENOM" id="CLU_032162_3_0_9"/>
<dbReference type="OrthoDB" id="9804372at2"/>
<dbReference type="Proteomes" id="UP000000370">
    <property type="component" value="Chromosome"/>
</dbReference>
<dbReference type="GO" id="GO:0005737">
    <property type="term" value="C:cytoplasm"/>
    <property type="evidence" value="ECO:0007669"/>
    <property type="project" value="UniProtKB-SubCell"/>
</dbReference>
<dbReference type="GO" id="GO:0004844">
    <property type="term" value="F:uracil DNA N-glycosylase activity"/>
    <property type="evidence" value="ECO:0007669"/>
    <property type="project" value="UniProtKB-UniRule"/>
</dbReference>
<dbReference type="GO" id="GO:0097510">
    <property type="term" value="P:base-excision repair, AP site formation via deaminated base removal"/>
    <property type="evidence" value="ECO:0007669"/>
    <property type="project" value="TreeGrafter"/>
</dbReference>
<dbReference type="CDD" id="cd10027">
    <property type="entry name" value="UDG-F1-like"/>
    <property type="match status" value="1"/>
</dbReference>
<dbReference type="FunFam" id="3.40.470.10:FF:000001">
    <property type="entry name" value="Uracil-DNA glycosylase"/>
    <property type="match status" value="1"/>
</dbReference>
<dbReference type="Gene3D" id="3.40.470.10">
    <property type="entry name" value="Uracil-DNA glycosylase-like domain"/>
    <property type="match status" value="1"/>
</dbReference>
<dbReference type="HAMAP" id="MF_00148">
    <property type="entry name" value="UDG"/>
    <property type="match status" value="1"/>
</dbReference>
<dbReference type="InterPro" id="IPR002043">
    <property type="entry name" value="UDG_fam1"/>
</dbReference>
<dbReference type="InterPro" id="IPR018085">
    <property type="entry name" value="Ura-DNA_Glyclase_AS"/>
</dbReference>
<dbReference type="InterPro" id="IPR005122">
    <property type="entry name" value="Uracil-DNA_glycosylase-like"/>
</dbReference>
<dbReference type="InterPro" id="IPR036895">
    <property type="entry name" value="Uracil-DNA_glycosylase-like_sf"/>
</dbReference>
<dbReference type="NCBIfam" id="NF003588">
    <property type="entry name" value="PRK05254.1-1"/>
    <property type="match status" value="1"/>
</dbReference>
<dbReference type="NCBIfam" id="NF003589">
    <property type="entry name" value="PRK05254.1-2"/>
    <property type="match status" value="1"/>
</dbReference>
<dbReference type="NCBIfam" id="NF003591">
    <property type="entry name" value="PRK05254.1-4"/>
    <property type="match status" value="1"/>
</dbReference>
<dbReference type="NCBIfam" id="NF003592">
    <property type="entry name" value="PRK05254.1-5"/>
    <property type="match status" value="1"/>
</dbReference>
<dbReference type="NCBIfam" id="TIGR00628">
    <property type="entry name" value="ung"/>
    <property type="match status" value="1"/>
</dbReference>
<dbReference type="PANTHER" id="PTHR11264">
    <property type="entry name" value="URACIL-DNA GLYCOSYLASE"/>
    <property type="match status" value="1"/>
</dbReference>
<dbReference type="PANTHER" id="PTHR11264:SF0">
    <property type="entry name" value="URACIL-DNA GLYCOSYLASE"/>
    <property type="match status" value="1"/>
</dbReference>
<dbReference type="Pfam" id="PF03167">
    <property type="entry name" value="UDG"/>
    <property type="match status" value="1"/>
</dbReference>
<dbReference type="SMART" id="SM00986">
    <property type="entry name" value="UDG"/>
    <property type="match status" value="1"/>
</dbReference>
<dbReference type="SMART" id="SM00987">
    <property type="entry name" value="UreE_C"/>
    <property type="match status" value="1"/>
</dbReference>
<dbReference type="SUPFAM" id="SSF52141">
    <property type="entry name" value="Uracil-DNA glycosylase-like"/>
    <property type="match status" value="1"/>
</dbReference>
<dbReference type="PROSITE" id="PS00130">
    <property type="entry name" value="U_DNA_GLYCOSYLASE"/>
    <property type="match status" value="1"/>
</dbReference>
<gene>
    <name evidence="1" type="primary">ung</name>
    <name type="ordered locus">Cphy_2839</name>
</gene>
<accession>A9KP29</accession>
<sequence length="225" mass="25886">MSMIQNDWLDSIGEEFHKPYYKQLYDFVKEEYSQTTIYPLAENIFNAFHFTPLSKVKVLILGQDPYHNVNQAHGLSFSVLPEQKDIPPSLQNIYKELQSDLGCFIPNNGYLKKWADQGVLLLNTVLTVRAHQANSHQGRGWEQFTNAIIQAVNQQDRPIVYLLWGKPAQSKIPMLTNPKHLILKAPHPSPLSSYRGFFGSKHFSQTNEFFNANGLEPIDWQIENI</sequence>
<proteinExistence type="inferred from homology"/>
<comment type="function">
    <text evidence="1">Excises uracil residues from the DNA which can arise as a result of misincorporation of dUMP residues by DNA polymerase or due to deamination of cytosine.</text>
</comment>
<comment type="catalytic activity">
    <reaction evidence="1">
        <text>Hydrolyzes single-stranded DNA or mismatched double-stranded DNA and polynucleotides, releasing free uracil.</text>
        <dbReference type="EC" id="3.2.2.27"/>
    </reaction>
</comment>
<comment type="subcellular location">
    <subcellularLocation>
        <location evidence="1">Cytoplasm</location>
    </subcellularLocation>
</comment>
<comment type="similarity">
    <text evidence="1">Belongs to the uracil-DNA glycosylase (UDG) superfamily. UNG family.</text>
</comment>
<reference key="1">
    <citation type="submission" date="2007-11" db="EMBL/GenBank/DDBJ databases">
        <title>Complete genome sequence of Clostridium phytofermentans ISDg.</title>
        <authorList>
            <person name="Leschine S.B."/>
            <person name="Warnick T.A."/>
            <person name="Blanchard J.L."/>
            <person name="Schnell D.J."/>
            <person name="Petit E.L."/>
            <person name="LaTouf W.G."/>
            <person name="Copeland A."/>
            <person name="Lucas S."/>
            <person name="Lapidus A."/>
            <person name="Barry K."/>
            <person name="Glavina del Rio T."/>
            <person name="Dalin E."/>
            <person name="Tice H."/>
            <person name="Pitluck S."/>
            <person name="Kiss H."/>
            <person name="Brettin T."/>
            <person name="Bruce D."/>
            <person name="Detter J.C."/>
            <person name="Han C."/>
            <person name="Kuske C."/>
            <person name="Schmutz J."/>
            <person name="Larimer F."/>
            <person name="Land M."/>
            <person name="Hauser L."/>
            <person name="Kyrpides N."/>
            <person name="Kim E.A."/>
            <person name="Richardson P."/>
        </authorList>
    </citation>
    <scope>NUCLEOTIDE SEQUENCE [LARGE SCALE GENOMIC DNA]</scope>
    <source>
        <strain>ATCC 700394 / DSM 18823 / ISDg</strain>
    </source>
</reference>
<keyword id="KW-0963">Cytoplasm</keyword>
<keyword id="KW-0227">DNA damage</keyword>
<keyword id="KW-0234">DNA repair</keyword>
<keyword id="KW-0378">Hydrolase</keyword>
<keyword id="KW-1185">Reference proteome</keyword>
<protein>
    <recommendedName>
        <fullName evidence="1">Uracil-DNA glycosylase</fullName>
        <shortName evidence="1">UDG</shortName>
        <ecNumber evidence="1">3.2.2.27</ecNumber>
    </recommendedName>
</protein>
<name>UNG_LACP7</name>